<reference key="1">
    <citation type="submission" date="2017-05" db="EMBL/GenBank/DDBJ databases">
        <authorList>
            <person name="Song R."/>
            <person name="Chenine A.L."/>
            <person name="Ruprecht R.M."/>
        </authorList>
    </citation>
    <scope>NUCLEOTIDE SEQUENCE [MRNA]</scope>
    <source>
        <strain>Pc537</strain>
    </source>
</reference>
<reference key="2">
    <citation type="journal article" date="2018" name="Mol. Genet. Genomics">
        <title>Identification and functional analysis of the NLP-encoding genes from the phytopathogenic oomycete Phytophthora capsici.</title>
        <authorList>
            <person name="Chen X.R."/>
            <person name="Huang S.X."/>
            <person name="Zhang Y."/>
            <person name="Sheng G.L."/>
            <person name="Li Y.P."/>
            <person name="Zhu F."/>
        </authorList>
    </citation>
    <scope>NUCLEOTIDE SEQUENCE [MRNA]</scope>
    <scope>FUNCTION</scope>
    <scope>DOMAIN</scope>
    <source>
        <strain>Pc537</strain>
    </source>
</reference>
<proteinExistence type="evidence at transcript level"/>
<organism>
    <name type="scientific">Phytophthora capsici</name>
    <dbReference type="NCBI Taxonomy" id="4784"/>
    <lineage>
        <taxon>Eukaryota</taxon>
        <taxon>Sar</taxon>
        <taxon>Stramenopiles</taxon>
        <taxon>Oomycota</taxon>
        <taxon>Peronosporales</taxon>
        <taxon>Peronosporaceae</taxon>
        <taxon>Phytophthora</taxon>
    </lineage>
</organism>
<comment type="function">
    <text evidence="4">Secreted effector that contributes strongly to virulence during infection by P.capsici.</text>
</comment>
<comment type="subcellular location">
    <subcellularLocation>
        <location evidence="7">Secreted</location>
    </subcellularLocation>
</comment>
<comment type="domain">
    <text evidence="7">Key residues/motif important for the effector activities are degenerated in most NLPs, including the nlp24 peptide consisting of the conserved region I (11-aa immunogenic part) and conserved region II (the heptapeptide GHRHDWE motif) that is important for phytotoxic activity.</text>
</comment>
<comment type="similarity">
    <text evidence="6">Belongs to the Necrosis inducing protein (NPP1) family.</text>
</comment>
<keyword id="KW-0325">Glycoprotein</keyword>
<keyword id="KW-0964">Secreted</keyword>
<keyword id="KW-0732">Signal</keyword>
<keyword id="KW-0843">Virulence</keyword>
<protein>
    <recommendedName>
        <fullName evidence="5">NLP effector protein Pc118551</fullName>
    </recommendedName>
    <alternativeName>
        <fullName evidence="5">Necrosis-inducing Pc118551</fullName>
    </alternativeName>
    <alternativeName>
        <fullName evidence="5">Nep1-like protein Pc118551</fullName>
    </alternativeName>
</protein>
<accession>A0A2R2Z564</accession>
<name>NLP51_PHYCP</name>
<gene>
    <name evidence="5" type="ORF">Pc118551</name>
</gene>
<evidence type="ECO:0000250" key="1">
    <source>
        <dbReference type="UniProtKB" id="L7NCS1"/>
    </source>
</evidence>
<evidence type="ECO:0000255" key="2"/>
<evidence type="ECO:0000255" key="3">
    <source>
        <dbReference type="PROSITE-ProRule" id="PRU00498"/>
    </source>
</evidence>
<evidence type="ECO:0000269" key="4">
    <source>
    </source>
</evidence>
<evidence type="ECO:0000303" key="5">
    <source>
    </source>
</evidence>
<evidence type="ECO:0000305" key="6"/>
<evidence type="ECO:0000305" key="7">
    <source>
    </source>
</evidence>
<dbReference type="EMBL" id="MF135586">
    <property type="protein sequence ID" value="AUD40032.1"/>
    <property type="molecule type" value="mRNA"/>
</dbReference>
<dbReference type="SMR" id="A0A2R2Z564"/>
<dbReference type="VEuPathDB" id="FungiDB:DVH05_010044"/>
<dbReference type="OrthoDB" id="107775at2759"/>
<dbReference type="PHI-base" id="PHI:8058"/>
<dbReference type="GO" id="GO:0005576">
    <property type="term" value="C:extracellular region"/>
    <property type="evidence" value="ECO:0007669"/>
    <property type="project" value="UniProtKB-SubCell"/>
</dbReference>
<dbReference type="InterPro" id="IPR008701">
    <property type="entry name" value="NPP1"/>
</dbReference>
<dbReference type="PANTHER" id="PTHR33657">
    <property type="entry name" value="DOMAIN PROTEIN, PUTATIVE (AFU_ORTHOLOGUE AFUA_5G00600)-RELATED"/>
    <property type="match status" value="1"/>
</dbReference>
<dbReference type="PANTHER" id="PTHR33657:SF8">
    <property type="entry name" value="DOMAIN PROTEIN, PUTATIVE (AFU_ORTHOLOGUE AFUA_5G00600)-RELATED"/>
    <property type="match status" value="1"/>
</dbReference>
<dbReference type="Pfam" id="PF05630">
    <property type="entry name" value="NPP1"/>
    <property type="match status" value="1"/>
</dbReference>
<dbReference type="PIRSF" id="PIRSF029958">
    <property type="entry name" value="Necrosis-inducing_protein"/>
    <property type="match status" value="1"/>
</dbReference>
<feature type="signal peptide" evidence="2">
    <location>
        <begin position="1"/>
        <end position="19"/>
    </location>
</feature>
<feature type="chain" id="PRO_5015344277" description="NLP effector protein Pc118551">
    <location>
        <begin position="20"/>
        <end position="245"/>
    </location>
</feature>
<feature type="short sequence motif" description="Hepta-peptide GHRHDWE motif" evidence="1">
    <location>
        <begin position="121"/>
        <end position="127"/>
    </location>
</feature>
<feature type="glycosylation site" description="N-linked (GlcNAc...) asparagine" evidence="3">
    <location>
        <position position="140"/>
    </location>
</feature>
<sequence length="245" mass="27592">MNLRAFLLSAVAALVAVQAEVTYIDHDTVKPFPQPKPKTDSEKAAVKYKPQLLVSYGCHPYPAVQADGSVSAGLKGTGPAAGECGGSALGSQVYSRSDWYKDKWAIMYSWYLPKGRPAKYQRRHLWETAVVWIDDPSLANSTILGVSLNYGWRHKTMAPIESEFLDDSRVKLESYRGFSYPRPKLRFTTHVGETQDLITWEQLTVEAREALSNAEFDSGLIKTTRREMPLKDGVFEKRLKDAWPF</sequence>